<feature type="chain" id="PRO_1000136520" description="Esterase FrsA">
    <location>
        <begin position="1"/>
        <end position="414"/>
    </location>
</feature>
<protein>
    <recommendedName>
        <fullName evidence="1">Esterase FrsA</fullName>
        <ecNumber evidence="1">3.1.1.1</ecNumber>
    </recommendedName>
</protein>
<sequence>MTQANLSETLFKPRFKHTETSTLVRRFNRGSQPPMQSALDGKNVPHWYRMINRLMWIWRGVDPREILDVQARIVMSDAERTDDDLYDTVIGYRGGNWIYEWAKQAMDWQQKACQEQDAMRSGRYWLHASTLYNIAAYPHLKGDELAEQAQALANRAYEEAAQRLPGSLREMEFAVPGGSPVTAFLHMPKGDGPFPTVLMCGGLDAMQTDYYTLYERYFAPRGIAMLTLDMPSVGFSSKWKLTQDSSLLHQHVLKALPNVPWVDHTRVAAFGFRFGANVAVRLAYLEAPRLKAVACLGPVVHALLSDPQRQSTVPEMYLDVLASRLGMHDASDEALRVELNRYSLKVQGLLGRRCPTPMLSGFWKNDPFSPEEESRLITTSSSDGKLIEIPFNPVYRNFDHALQEITDWINHRLC</sequence>
<keyword id="KW-0378">Hydrolase</keyword>
<keyword id="KW-0719">Serine esterase</keyword>
<reference key="1">
    <citation type="journal article" date="2011" name="J. Bacteriol.">
        <title>Comparative genomics of 28 Salmonella enterica isolates: evidence for CRISPR-mediated adaptive sublineage evolution.</title>
        <authorList>
            <person name="Fricke W.F."/>
            <person name="Mammel M.K."/>
            <person name="McDermott P.F."/>
            <person name="Tartera C."/>
            <person name="White D.G."/>
            <person name="Leclerc J.E."/>
            <person name="Ravel J."/>
            <person name="Cebula T.A."/>
        </authorList>
    </citation>
    <scope>NUCLEOTIDE SEQUENCE [LARGE SCALE GENOMIC DNA]</scope>
    <source>
        <strain>SL483</strain>
    </source>
</reference>
<comment type="function">
    <text evidence="1">Catalyzes the hydrolysis of esters.</text>
</comment>
<comment type="catalytic activity">
    <reaction evidence="1">
        <text>a carboxylic ester + H2O = an alcohol + a carboxylate + H(+)</text>
        <dbReference type="Rhea" id="RHEA:21164"/>
        <dbReference type="ChEBI" id="CHEBI:15377"/>
        <dbReference type="ChEBI" id="CHEBI:15378"/>
        <dbReference type="ChEBI" id="CHEBI:29067"/>
        <dbReference type="ChEBI" id="CHEBI:30879"/>
        <dbReference type="ChEBI" id="CHEBI:33308"/>
        <dbReference type="EC" id="3.1.1.1"/>
    </reaction>
</comment>
<comment type="similarity">
    <text evidence="1">Belongs to the FrsA family.</text>
</comment>
<gene>
    <name evidence="1" type="primary">frsA</name>
    <name type="ordered locus">SeAg_B0352</name>
</gene>
<name>FRSA_SALA4</name>
<organism>
    <name type="scientific">Salmonella agona (strain SL483)</name>
    <dbReference type="NCBI Taxonomy" id="454166"/>
    <lineage>
        <taxon>Bacteria</taxon>
        <taxon>Pseudomonadati</taxon>
        <taxon>Pseudomonadota</taxon>
        <taxon>Gammaproteobacteria</taxon>
        <taxon>Enterobacterales</taxon>
        <taxon>Enterobacteriaceae</taxon>
        <taxon>Salmonella</taxon>
    </lineage>
</organism>
<evidence type="ECO:0000255" key="1">
    <source>
        <dbReference type="HAMAP-Rule" id="MF_01063"/>
    </source>
</evidence>
<dbReference type="EC" id="3.1.1.1" evidence="1"/>
<dbReference type="EMBL" id="CP001138">
    <property type="protein sequence ID" value="ACH50525.1"/>
    <property type="molecule type" value="Genomic_DNA"/>
</dbReference>
<dbReference type="RefSeq" id="WP_000189586.1">
    <property type="nucleotide sequence ID" value="NC_011149.1"/>
</dbReference>
<dbReference type="SMR" id="B5EWK1"/>
<dbReference type="ESTHER" id="salty-yafa">
    <property type="family name" value="Duf_1100-R"/>
</dbReference>
<dbReference type="KEGG" id="sea:SeAg_B0352"/>
<dbReference type="HOGENOM" id="CLU_036819_0_0_6"/>
<dbReference type="Proteomes" id="UP000008819">
    <property type="component" value="Chromosome"/>
</dbReference>
<dbReference type="GO" id="GO:0106435">
    <property type="term" value="F:carboxylesterase activity"/>
    <property type="evidence" value="ECO:0007669"/>
    <property type="project" value="UniProtKB-EC"/>
</dbReference>
<dbReference type="FunFam" id="3.40.50.1820:FF:000022">
    <property type="entry name" value="Esterase FrsA"/>
    <property type="match status" value="1"/>
</dbReference>
<dbReference type="Gene3D" id="3.40.50.1820">
    <property type="entry name" value="alpha/beta hydrolase"/>
    <property type="match status" value="1"/>
</dbReference>
<dbReference type="HAMAP" id="MF_01063">
    <property type="entry name" value="FrsA"/>
    <property type="match status" value="1"/>
</dbReference>
<dbReference type="InterPro" id="IPR029058">
    <property type="entry name" value="AB_hydrolase_fold"/>
</dbReference>
<dbReference type="InterPro" id="IPR043423">
    <property type="entry name" value="FrsA"/>
</dbReference>
<dbReference type="InterPro" id="IPR010520">
    <property type="entry name" value="FrsA-like"/>
</dbReference>
<dbReference type="InterPro" id="IPR050261">
    <property type="entry name" value="FrsA_esterase"/>
</dbReference>
<dbReference type="NCBIfam" id="NF003460">
    <property type="entry name" value="PRK05077.1"/>
    <property type="match status" value="1"/>
</dbReference>
<dbReference type="PANTHER" id="PTHR22946">
    <property type="entry name" value="DIENELACTONE HYDROLASE DOMAIN-CONTAINING PROTEIN-RELATED"/>
    <property type="match status" value="1"/>
</dbReference>
<dbReference type="PANTHER" id="PTHR22946:SF4">
    <property type="entry name" value="ESTERASE FRSA"/>
    <property type="match status" value="1"/>
</dbReference>
<dbReference type="Pfam" id="PF06500">
    <property type="entry name" value="FrsA-like"/>
    <property type="match status" value="1"/>
</dbReference>
<dbReference type="SUPFAM" id="SSF53474">
    <property type="entry name" value="alpha/beta-Hydrolases"/>
    <property type="match status" value="1"/>
</dbReference>
<proteinExistence type="inferred from homology"/>
<accession>B5EWK1</accession>